<dbReference type="EC" id="6.1.1.11" evidence="1"/>
<dbReference type="EMBL" id="CU928164">
    <property type="protein sequence ID" value="CAR18382.1"/>
    <property type="molecule type" value="Genomic_DNA"/>
</dbReference>
<dbReference type="RefSeq" id="WP_000886683.1">
    <property type="nucleotide sequence ID" value="NC_011750.1"/>
</dbReference>
<dbReference type="RefSeq" id="YP_002408218.1">
    <property type="nucleotide sequence ID" value="NC_011750.1"/>
</dbReference>
<dbReference type="SMR" id="B7NM82"/>
<dbReference type="STRING" id="585057.ECIAI39_2255"/>
<dbReference type="GeneID" id="93776527"/>
<dbReference type="KEGG" id="ect:ECIAI39_2255"/>
<dbReference type="PATRIC" id="fig|585057.6.peg.2349"/>
<dbReference type="HOGENOM" id="CLU_023797_1_1_6"/>
<dbReference type="UniPathway" id="UPA00906">
    <property type="reaction ID" value="UER00895"/>
</dbReference>
<dbReference type="Proteomes" id="UP000000749">
    <property type="component" value="Chromosome"/>
</dbReference>
<dbReference type="GO" id="GO:0005737">
    <property type="term" value="C:cytoplasm"/>
    <property type="evidence" value="ECO:0007669"/>
    <property type="project" value="UniProtKB-SubCell"/>
</dbReference>
<dbReference type="GO" id="GO:0005524">
    <property type="term" value="F:ATP binding"/>
    <property type="evidence" value="ECO:0007669"/>
    <property type="project" value="UniProtKB-UniRule"/>
</dbReference>
<dbReference type="GO" id="GO:0004828">
    <property type="term" value="F:serine-tRNA ligase activity"/>
    <property type="evidence" value="ECO:0007669"/>
    <property type="project" value="UniProtKB-UniRule"/>
</dbReference>
<dbReference type="GO" id="GO:0016260">
    <property type="term" value="P:selenocysteine biosynthetic process"/>
    <property type="evidence" value="ECO:0007669"/>
    <property type="project" value="UniProtKB-UniRule"/>
</dbReference>
<dbReference type="GO" id="GO:0006434">
    <property type="term" value="P:seryl-tRNA aminoacylation"/>
    <property type="evidence" value="ECO:0007669"/>
    <property type="project" value="UniProtKB-UniRule"/>
</dbReference>
<dbReference type="CDD" id="cd00770">
    <property type="entry name" value="SerRS_core"/>
    <property type="match status" value="1"/>
</dbReference>
<dbReference type="FunFam" id="1.10.287.40:FF:000001">
    <property type="entry name" value="Serine--tRNA ligase"/>
    <property type="match status" value="1"/>
</dbReference>
<dbReference type="FunFam" id="3.30.930.10:FF:000018">
    <property type="entry name" value="Serine--tRNA ligase"/>
    <property type="match status" value="1"/>
</dbReference>
<dbReference type="Gene3D" id="3.30.930.10">
    <property type="entry name" value="Bira Bifunctional Protein, Domain 2"/>
    <property type="match status" value="1"/>
</dbReference>
<dbReference type="Gene3D" id="1.10.287.40">
    <property type="entry name" value="Serine-tRNA synthetase, tRNA binding domain"/>
    <property type="match status" value="1"/>
</dbReference>
<dbReference type="HAMAP" id="MF_00176">
    <property type="entry name" value="Ser_tRNA_synth_type1"/>
    <property type="match status" value="1"/>
</dbReference>
<dbReference type="InterPro" id="IPR002314">
    <property type="entry name" value="aa-tRNA-synt_IIb"/>
</dbReference>
<dbReference type="InterPro" id="IPR006195">
    <property type="entry name" value="aa-tRNA-synth_II"/>
</dbReference>
<dbReference type="InterPro" id="IPR045864">
    <property type="entry name" value="aa-tRNA-synth_II/BPL/LPL"/>
</dbReference>
<dbReference type="InterPro" id="IPR002317">
    <property type="entry name" value="Ser-tRNA-ligase_type_1"/>
</dbReference>
<dbReference type="InterPro" id="IPR015866">
    <property type="entry name" value="Ser-tRNA-synth_1_N"/>
</dbReference>
<dbReference type="InterPro" id="IPR042103">
    <property type="entry name" value="SerRS_1_N_sf"/>
</dbReference>
<dbReference type="InterPro" id="IPR033729">
    <property type="entry name" value="SerRS_core"/>
</dbReference>
<dbReference type="InterPro" id="IPR010978">
    <property type="entry name" value="tRNA-bd_arm"/>
</dbReference>
<dbReference type="NCBIfam" id="TIGR00414">
    <property type="entry name" value="serS"/>
    <property type="match status" value="1"/>
</dbReference>
<dbReference type="PANTHER" id="PTHR43697:SF1">
    <property type="entry name" value="SERINE--TRNA LIGASE"/>
    <property type="match status" value="1"/>
</dbReference>
<dbReference type="PANTHER" id="PTHR43697">
    <property type="entry name" value="SERYL-TRNA SYNTHETASE"/>
    <property type="match status" value="1"/>
</dbReference>
<dbReference type="Pfam" id="PF02403">
    <property type="entry name" value="Seryl_tRNA_N"/>
    <property type="match status" value="1"/>
</dbReference>
<dbReference type="Pfam" id="PF00587">
    <property type="entry name" value="tRNA-synt_2b"/>
    <property type="match status" value="1"/>
</dbReference>
<dbReference type="PIRSF" id="PIRSF001529">
    <property type="entry name" value="Ser-tRNA-synth_IIa"/>
    <property type="match status" value="1"/>
</dbReference>
<dbReference type="PRINTS" id="PR00981">
    <property type="entry name" value="TRNASYNTHSER"/>
</dbReference>
<dbReference type="SUPFAM" id="SSF55681">
    <property type="entry name" value="Class II aaRS and biotin synthetases"/>
    <property type="match status" value="1"/>
</dbReference>
<dbReference type="SUPFAM" id="SSF46589">
    <property type="entry name" value="tRNA-binding arm"/>
    <property type="match status" value="1"/>
</dbReference>
<dbReference type="PROSITE" id="PS50862">
    <property type="entry name" value="AA_TRNA_LIGASE_II"/>
    <property type="match status" value="1"/>
</dbReference>
<evidence type="ECO:0000255" key="1">
    <source>
        <dbReference type="HAMAP-Rule" id="MF_00176"/>
    </source>
</evidence>
<accession>B7NM82</accession>
<name>SYS_ECO7I</name>
<protein>
    <recommendedName>
        <fullName evidence="1">Serine--tRNA ligase</fullName>
        <ecNumber evidence="1">6.1.1.11</ecNumber>
    </recommendedName>
    <alternativeName>
        <fullName evidence="1">Seryl-tRNA synthetase</fullName>
        <shortName evidence="1">SerRS</shortName>
    </alternativeName>
    <alternativeName>
        <fullName evidence="1">Seryl-tRNA(Ser/Sec) synthetase</fullName>
    </alternativeName>
</protein>
<keyword id="KW-0030">Aminoacyl-tRNA synthetase</keyword>
<keyword id="KW-0067">ATP-binding</keyword>
<keyword id="KW-0963">Cytoplasm</keyword>
<keyword id="KW-0436">Ligase</keyword>
<keyword id="KW-0547">Nucleotide-binding</keyword>
<keyword id="KW-0648">Protein biosynthesis</keyword>
<sequence length="430" mass="48414">MLDPNLLRNEPDAVAEKLARRGFKLDVDKLGALEERRKVLQVKTENLQAERNSRSKSIGQAKARGEDIEPLRLEVNKLGEELDAAKAELDALQAEIRDIALTIPNLPADEVPVGKDENDNVEVSRWGTPREFDFEVRDHVTLGEMHSGLDFAAAVKLTGSRFVVMKGQIARMHRALSQFMLDLHTEQHGYSENYVPYLVNQDTLYGTGQLPKFAGDLFHTRPLEEEADTSNYALIPTAEVPLTNLVRGEIIDEDDLPIKMTAHTPCFRSEAGSYGRDTRGLIRMHQFDKVEMVQIVRPEDSMAALEEMTGHAEKVLQLLGLPYRKIILCTGDMGFGACKTYDLEVWIPAQNTYREISSCSNVWDFQARRMQARCRSKSDKKTRLVHTLNGSGLAVGRTLVAVMENYQQADGRIEVPEVLRPYMNGLEYIG</sequence>
<feature type="chain" id="PRO_1000199481" description="Serine--tRNA ligase">
    <location>
        <begin position="1"/>
        <end position="430"/>
    </location>
</feature>
<feature type="binding site" evidence="1">
    <location>
        <begin position="237"/>
        <end position="239"/>
    </location>
    <ligand>
        <name>L-serine</name>
        <dbReference type="ChEBI" id="CHEBI:33384"/>
    </ligand>
</feature>
<feature type="binding site" evidence="1">
    <location>
        <begin position="268"/>
        <end position="270"/>
    </location>
    <ligand>
        <name>ATP</name>
        <dbReference type="ChEBI" id="CHEBI:30616"/>
    </ligand>
</feature>
<feature type="binding site" evidence="1">
    <location>
        <position position="291"/>
    </location>
    <ligand>
        <name>L-serine</name>
        <dbReference type="ChEBI" id="CHEBI:33384"/>
    </ligand>
</feature>
<feature type="binding site" evidence="1">
    <location>
        <begin position="355"/>
        <end position="358"/>
    </location>
    <ligand>
        <name>ATP</name>
        <dbReference type="ChEBI" id="CHEBI:30616"/>
    </ligand>
</feature>
<feature type="binding site" evidence="1">
    <location>
        <position position="391"/>
    </location>
    <ligand>
        <name>L-serine</name>
        <dbReference type="ChEBI" id="CHEBI:33384"/>
    </ligand>
</feature>
<proteinExistence type="inferred from homology"/>
<reference key="1">
    <citation type="journal article" date="2009" name="PLoS Genet.">
        <title>Organised genome dynamics in the Escherichia coli species results in highly diverse adaptive paths.</title>
        <authorList>
            <person name="Touchon M."/>
            <person name="Hoede C."/>
            <person name="Tenaillon O."/>
            <person name="Barbe V."/>
            <person name="Baeriswyl S."/>
            <person name="Bidet P."/>
            <person name="Bingen E."/>
            <person name="Bonacorsi S."/>
            <person name="Bouchier C."/>
            <person name="Bouvet O."/>
            <person name="Calteau A."/>
            <person name="Chiapello H."/>
            <person name="Clermont O."/>
            <person name="Cruveiller S."/>
            <person name="Danchin A."/>
            <person name="Diard M."/>
            <person name="Dossat C."/>
            <person name="Karoui M.E."/>
            <person name="Frapy E."/>
            <person name="Garry L."/>
            <person name="Ghigo J.M."/>
            <person name="Gilles A.M."/>
            <person name="Johnson J."/>
            <person name="Le Bouguenec C."/>
            <person name="Lescat M."/>
            <person name="Mangenot S."/>
            <person name="Martinez-Jehanne V."/>
            <person name="Matic I."/>
            <person name="Nassif X."/>
            <person name="Oztas S."/>
            <person name="Petit M.A."/>
            <person name="Pichon C."/>
            <person name="Rouy Z."/>
            <person name="Ruf C.S."/>
            <person name="Schneider D."/>
            <person name="Tourret J."/>
            <person name="Vacherie B."/>
            <person name="Vallenet D."/>
            <person name="Medigue C."/>
            <person name="Rocha E.P.C."/>
            <person name="Denamur E."/>
        </authorList>
    </citation>
    <scope>NUCLEOTIDE SEQUENCE [LARGE SCALE GENOMIC DNA]</scope>
    <source>
        <strain>IAI39 / ExPEC</strain>
    </source>
</reference>
<organism>
    <name type="scientific">Escherichia coli O7:K1 (strain IAI39 / ExPEC)</name>
    <dbReference type="NCBI Taxonomy" id="585057"/>
    <lineage>
        <taxon>Bacteria</taxon>
        <taxon>Pseudomonadati</taxon>
        <taxon>Pseudomonadota</taxon>
        <taxon>Gammaproteobacteria</taxon>
        <taxon>Enterobacterales</taxon>
        <taxon>Enterobacteriaceae</taxon>
        <taxon>Escherichia</taxon>
    </lineage>
</organism>
<gene>
    <name evidence="1" type="primary">serS</name>
    <name type="ordered locus">ECIAI39_2255</name>
</gene>
<comment type="function">
    <text evidence="1">Catalyzes the attachment of serine to tRNA(Ser). Is also able to aminoacylate tRNA(Sec) with serine, to form the misacylated tRNA L-seryl-tRNA(Sec), which will be further converted into selenocysteinyl-tRNA(Sec).</text>
</comment>
<comment type="catalytic activity">
    <reaction evidence="1">
        <text>tRNA(Ser) + L-serine + ATP = L-seryl-tRNA(Ser) + AMP + diphosphate + H(+)</text>
        <dbReference type="Rhea" id="RHEA:12292"/>
        <dbReference type="Rhea" id="RHEA-COMP:9669"/>
        <dbReference type="Rhea" id="RHEA-COMP:9703"/>
        <dbReference type="ChEBI" id="CHEBI:15378"/>
        <dbReference type="ChEBI" id="CHEBI:30616"/>
        <dbReference type="ChEBI" id="CHEBI:33019"/>
        <dbReference type="ChEBI" id="CHEBI:33384"/>
        <dbReference type="ChEBI" id="CHEBI:78442"/>
        <dbReference type="ChEBI" id="CHEBI:78533"/>
        <dbReference type="ChEBI" id="CHEBI:456215"/>
        <dbReference type="EC" id="6.1.1.11"/>
    </reaction>
</comment>
<comment type="catalytic activity">
    <reaction evidence="1">
        <text>tRNA(Sec) + L-serine + ATP = L-seryl-tRNA(Sec) + AMP + diphosphate + H(+)</text>
        <dbReference type="Rhea" id="RHEA:42580"/>
        <dbReference type="Rhea" id="RHEA-COMP:9742"/>
        <dbReference type="Rhea" id="RHEA-COMP:10128"/>
        <dbReference type="ChEBI" id="CHEBI:15378"/>
        <dbReference type="ChEBI" id="CHEBI:30616"/>
        <dbReference type="ChEBI" id="CHEBI:33019"/>
        <dbReference type="ChEBI" id="CHEBI:33384"/>
        <dbReference type="ChEBI" id="CHEBI:78442"/>
        <dbReference type="ChEBI" id="CHEBI:78533"/>
        <dbReference type="ChEBI" id="CHEBI:456215"/>
        <dbReference type="EC" id="6.1.1.11"/>
    </reaction>
</comment>
<comment type="pathway">
    <text evidence="1">Aminoacyl-tRNA biosynthesis; selenocysteinyl-tRNA(Sec) biosynthesis; L-seryl-tRNA(Sec) from L-serine and tRNA(Sec): step 1/1.</text>
</comment>
<comment type="subunit">
    <text evidence="1">Homodimer. The tRNA molecule binds across the dimer.</text>
</comment>
<comment type="subcellular location">
    <subcellularLocation>
        <location evidence="1">Cytoplasm</location>
    </subcellularLocation>
</comment>
<comment type="domain">
    <text evidence="1">Consists of two distinct domains, a catalytic core and a N-terminal extension that is involved in tRNA binding.</text>
</comment>
<comment type="similarity">
    <text evidence="1">Belongs to the class-II aminoacyl-tRNA synthetase family. Type-1 seryl-tRNA synthetase subfamily.</text>
</comment>